<feature type="chain" id="PRO_0000389258" description="Probable galactinol--sucrose galactosyltransferase 5">
    <location>
        <begin position="1"/>
        <end position="783"/>
    </location>
</feature>
<feature type="modified residue" description="Phosphoserine" evidence="7">
    <location>
        <position position="9"/>
    </location>
</feature>
<feature type="modified residue" description="Phosphoserine" evidence="7">
    <location>
        <position position="11"/>
    </location>
</feature>
<keyword id="KW-0119">Carbohydrate metabolism</keyword>
<keyword id="KW-0328">Glycosyltransferase</keyword>
<keyword id="KW-0597">Phosphoprotein</keyword>
<keyword id="KW-1185">Reference proteome</keyword>
<keyword id="KW-0808">Transferase</keyword>
<dbReference type="EC" id="2.4.1.82"/>
<dbReference type="EMBL" id="AB006702">
    <property type="protein sequence ID" value="BAB11595.1"/>
    <property type="molecule type" value="Genomic_DNA"/>
</dbReference>
<dbReference type="EMBL" id="CP002688">
    <property type="protein sequence ID" value="AED94542.1"/>
    <property type="molecule type" value="Genomic_DNA"/>
</dbReference>
<dbReference type="EMBL" id="AY062781">
    <property type="protein sequence ID" value="AAL32859.1"/>
    <property type="molecule type" value="mRNA"/>
</dbReference>
<dbReference type="EMBL" id="AY081645">
    <property type="protein sequence ID" value="AAM10207.1"/>
    <property type="molecule type" value="mRNA"/>
</dbReference>
<dbReference type="RefSeq" id="NP_198855.1">
    <property type="nucleotide sequence ID" value="NM_123403.4"/>
</dbReference>
<dbReference type="SMR" id="Q9FND9"/>
<dbReference type="BioGRID" id="19288">
    <property type="interactions" value="1"/>
</dbReference>
<dbReference type="FunCoup" id="Q9FND9">
    <property type="interactions" value="203"/>
</dbReference>
<dbReference type="STRING" id="3702.Q9FND9"/>
<dbReference type="CAZy" id="GH36">
    <property type="family name" value="Glycoside Hydrolase Family 36"/>
</dbReference>
<dbReference type="iPTMnet" id="Q9FND9"/>
<dbReference type="PaxDb" id="3702-AT5G40390.1"/>
<dbReference type="ProteomicsDB" id="236262"/>
<dbReference type="EnsemblPlants" id="AT5G40390.1">
    <property type="protein sequence ID" value="AT5G40390.1"/>
    <property type="gene ID" value="AT5G40390"/>
</dbReference>
<dbReference type="GeneID" id="834037"/>
<dbReference type="Gramene" id="AT5G40390.1">
    <property type="protein sequence ID" value="AT5G40390.1"/>
    <property type="gene ID" value="AT5G40390"/>
</dbReference>
<dbReference type="KEGG" id="ath:AT5G40390"/>
<dbReference type="Araport" id="AT5G40390"/>
<dbReference type="TAIR" id="AT5G40390">
    <property type="gene designation" value="SIP1"/>
</dbReference>
<dbReference type="eggNOG" id="ENOG502QTKB">
    <property type="taxonomic scope" value="Eukaryota"/>
</dbReference>
<dbReference type="HOGENOM" id="CLU_007066_0_0_1"/>
<dbReference type="InParanoid" id="Q9FND9"/>
<dbReference type="OMA" id="YEDSMVM"/>
<dbReference type="PhylomeDB" id="Q9FND9"/>
<dbReference type="BioCyc" id="ARA:AT5G40390-MONOMER"/>
<dbReference type="BRENDA" id="2.4.1.82">
    <property type="organism ID" value="399"/>
</dbReference>
<dbReference type="PRO" id="PR:Q9FND9"/>
<dbReference type="Proteomes" id="UP000006548">
    <property type="component" value="Chromosome 5"/>
</dbReference>
<dbReference type="ExpressionAtlas" id="Q9FND9">
    <property type="expression patterns" value="baseline and differential"/>
</dbReference>
<dbReference type="GO" id="GO:0009507">
    <property type="term" value="C:chloroplast"/>
    <property type="evidence" value="ECO:0007005"/>
    <property type="project" value="TAIR"/>
</dbReference>
<dbReference type="GO" id="GO:0047274">
    <property type="term" value="F:galactinol-sucrose galactosyltransferase activity"/>
    <property type="evidence" value="ECO:0007669"/>
    <property type="project" value="UniProtKB-EC"/>
</dbReference>
<dbReference type="GO" id="GO:0006979">
    <property type="term" value="P:response to oxidative stress"/>
    <property type="evidence" value="ECO:0000270"/>
    <property type="project" value="TAIR"/>
</dbReference>
<dbReference type="GO" id="GO:0009414">
    <property type="term" value="P:response to water deprivation"/>
    <property type="evidence" value="ECO:0000270"/>
    <property type="project" value="TAIR"/>
</dbReference>
<dbReference type="FunFam" id="3.20.20.70:FF:000311">
    <property type="entry name" value="Probable galactinol--sucrose galactosyltransferase 5"/>
    <property type="match status" value="1"/>
</dbReference>
<dbReference type="Gene3D" id="3.20.20.70">
    <property type="entry name" value="Aldolase class I"/>
    <property type="match status" value="1"/>
</dbReference>
<dbReference type="InterPro" id="IPR013785">
    <property type="entry name" value="Aldolase_TIM"/>
</dbReference>
<dbReference type="InterPro" id="IPR017853">
    <property type="entry name" value="Glycoside_hydrolase_SF"/>
</dbReference>
<dbReference type="InterPro" id="IPR008811">
    <property type="entry name" value="Glycosyl_hydrolases_36"/>
</dbReference>
<dbReference type="PANTHER" id="PTHR31268">
    <property type="match status" value="1"/>
</dbReference>
<dbReference type="PANTHER" id="PTHR31268:SF14">
    <property type="entry name" value="GALACTINOL--SUCROSE GALACTOSYLTRANSFERASE 5-RELATED"/>
    <property type="match status" value="1"/>
</dbReference>
<dbReference type="Pfam" id="PF05691">
    <property type="entry name" value="Raffinose_syn"/>
    <property type="match status" value="1"/>
</dbReference>
<dbReference type="SUPFAM" id="SSF51445">
    <property type="entry name" value="(Trans)glycosidases"/>
    <property type="match status" value="1"/>
</dbReference>
<accession>Q9FND9</accession>
<evidence type="ECO:0000250" key="1"/>
<evidence type="ECO:0000269" key="2">
    <source>
    </source>
</evidence>
<evidence type="ECO:0000269" key="3">
    <source>
    </source>
</evidence>
<evidence type="ECO:0000269" key="4">
    <source>
    </source>
</evidence>
<evidence type="ECO:0000269" key="5">
    <source ref="4"/>
</evidence>
<evidence type="ECO:0000305" key="6"/>
<evidence type="ECO:0007744" key="7">
    <source>
    </source>
</evidence>
<proteinExistence type="evidence at protein level"/>
<sequence>MASPCLTKSDSGINGVDFTEKFRLEDSTLLANGQVVLTDVPVNVTLTSSPYLVDKDGVPLDVSAGSFIGFNLDGEPKSHHVASIGKLKNIRFMSIFRFKVWWTTHWVGSNGRDIENETQIIILDQSGSDSGPGSGSGRPYVLLLPLLEGSFRSSFQSGEDDDVAVCVESGSTEVTGSEFRQIVYVHAGDDPFKLVKDAMKVIRVHMNTFKLLEEKSPPGIVDKFGWCTWDAFYLTVNPDGVHKGVKCLVDGGCPPGLVLIDDGWQSIGHDSDGIDVEGMNITVAGEQMPCRLLKFEENHKFKDYVSPKDQNDVGMKAFVRDLKDEFSTVDYIYVWHALCGYWGGLRPEAPALPPSTIIRPELSPGLKLTMEDLAVDKIIETGIGFASPDLAKEFYEGLHSHLQNAGIDGVKVDVIHILEMLCQKYGGRVDLAKAYFKALTSSVNKHFNGNGVIASMEHCNDFMFLGTEAISLGRVGDDFWCTDPSGDPNGTFWLQGCHMVHCAYNSLWMGNFIQPDWDMFQSTHPCAEFHAASRAISGGPIYISDCVGKHDFDLLKRLVLPNGSILRCEYYALPTRDRLFEDPLHDGKTMLKIWNLNKYTGVIGAFNCQGGGWCRETRRNQCFSECVNTLTATTSPKDVEWNSGSSPISIANVEEFALFLSQSKKLLLSGLNDDLELTLEPFKFELITVSPVVTIEGNSVRFAPIGLVNMLNTSGAIRSLVYNDESVEVGVFGAGEFRVYASKKPVSCLIDGEVVEFGYEDSMVMVQVPWSGPDGLSSIQYLF</sequence>
<comment type="function">
    <text evidence="1">Transglycosidase operating by a ping-pong reaction mechanism. Involved in the synthesis of raffinose, a major soluble carbohydrate in seeds, roots and tubers (By similarity).</text>
</comment>
<comment type="catalytic activity">
    <reaction>
        <text>alpha-D-galactosyl-(1-&gt;3)-1D-myo-inositol + sucrose = raffinose + myo-inositol</text>
        <dbReference type="Rhea" id="RHEA:20161"/>
        <dbReference type="ChEBI" id="CHEBI:16634"/>
        <dbReference type="ChEBI" id="CHEBI:17268"/>
        <dbReference type="ChEBI" id="CHEBI:17505"/>
        <dbReference type="ChEBI" id="CHEBI:17992"/>
        <dbReference type="EC" id="2.4.1.82"/>
    </reaction>
</comment>
<comment type="induction">
    <text evidence="3 4">By oxidative stress and cold treatment.</text>
</comment>
<comment type="disruption phenotype">
    <text evidence="2 5">Reduced drought tolerance, but no effect on freezing tolerance or on the ability to cold acclimation.</text>
</comment>
<comment type="similarity">
    <text evidence="6">Belongs to the glycosyl hydrolases 36 family.</text>
</comment>
<organism>
    <name type="scientific">Arabidopsis thaliana</name>
    <name type="common">Mouse-ear cress</name>
    <dbReference type="NCBI Taxonomy" id="3702"/>
    <lineage>
        <taxon>Eukaryota</taxon>
        <taxon>Viridiplantae</taxon>
        <taxon>Streptophyta</taxon>
        <taxon>Embryophyta</taxon>
        <taxon>Tracheophyta</taxon>
        <taxon>Spermatophyta</taxon>
        <taxon>Magnoliopsida</taxon>
        <taxon>eudicotyledons</taxon>
        <taxon>Gunneridae</taxon>
        <taxon>Pentapetalae</taxon>
        <taxon>rosids</taxon>
        <taxon>malvids</taxon>
        <taxon>Brassicales</taxon>
        <taxon>Brassicaceae</taxon>
        <taxon>Camelineae</taxon>
        <taxon>Arabidopsis</taxon>
    </lineage>
</organism>
<gene>
    <name type="primary">RFS5</name>
    <name type="synonym">RS5</name>
    <name type="ordered locus">At5g40390</name>
    <name type="ORF">MPO12.100</name>
    <name type="ORF">MPO12.13</name>
</gene>
<name>RFS5_ARATH</name>
<protein>
    <recommendedName>
        <fullName>Probable galactinol--sucrose galactosyltransferase 5</fullName>
        <ecNumber>2.4.1.82</ecNumber>
    </recommendedName>
    <alternativeName>
        <fullName>Protein SEED IMBIBITION 1-LIKE</fullName>
    </alternativeName>
    <alternativeName>
        <fullName>Raffinose synthase 5</fullName>
    </alternativeName>
</protein>
<reference key="1">
    <citation type="journal article" date="1997" name="DNA Res.">
        <title>Structural analysis of Arabidopsis thaliana chromosome 5. II. Sequence features of the regions of 1,044,062 bp covered by thirteen physically assigned P1 clones.</title>
        <authorList>
            <person name="Kotani H."/>
            <person name="Nakamura Y."/>
            <person name="Sato S."/>
            <person name="Kaneko T."/>
            <person name="Asamizu E."/>
            <person name="Miyajima N."/>
            <person name="Tabata S."/>
        </authorList>
    </citation>
    <scope>NUCLEOTIDE SEQUENCE [LARGE SCALE GENOMIC DNA]</scope>
    <source>
        <strain>cv. Columbia</strain>
    </source>
</reference>
<reference key="2">
    <citation type="journal article" date="2017" name="Plant J.">
        <title>Araport11: a complete reannotation of the Arabidopsis thaliana reference genome.</title>
        <authorList>
            <person name="Cheng C.Y."/>
            <person name="Krishnakumar V."/>
            <person name="Chan A.P."/>
            <person name="Thibaud-Nissen F."/>
            <person name="Schobel S."/>
            <person name="Town C.D."/>
        </authorList>
    </citation>
    <scope>GENOME REANNOTATION</scope>
    <source>
        <strain>cv. Columbia</strain>
    </source>
</reference>
<reference key="3">
    <citation type="journal article" date="2003" name="Science">
        <title>Empirical analysis of transcriptional activity in the Arabidopsis genome.</title>
        <authorList>
            <person name="Yamada K."/>
            <person name="Lim J."/>
            <person name="Dale J.M."/>
            <person name="Chen H."/>
            <person name="Shinn P."/>
            <person name="Palm C.J."/>
            <person name="Southwick A.M."/>
            <person name="Wu H.C."/>
            <person name="Kim C.J."/>
            <person name="Nguyen M."/>
            <person name="Pham P.K."/>
            <person name="Cheuk R.F."/>
            <person name="Karlin-Newmann G."/>
            <person name="Liu S.X."/>
            <person name="Lam B."/>
            <person name="Sakano H."/>
            <person name="Wu T."/>
            <person name="Yu G."/>
            <person name="Miranda M."/>
            <person name="Quach H.L."/>
            <person name="Tripp M."/>
            <person name="Chang C.H."/>
            <person name="Lee J.M."/>
            <person name="Toriumi M.J."/>
            <person name="Chan M.M."/>
            <person name="Tang C.C."/>
            <person name="Onodera C.S."/>
            <person name="Deng J.M."/>
            <person name="Akiyama K."/>
            <person name="Ansari Y."/>
            <person name="Arakawa T."/>
            <person name="Banh J."/>
            <person name="Banno F."/>
            <person name="Bowser L."/>
            <person name="Brooks S.Y."/>
            <person name="Carninci P."/>
            <person name="Chao Q."/>
            <person name="Choy N."/>
            <person name="Enju A."/>
            <person name="Goldsmith A.D."/>
            <person name="Gurjal M."/>
            <person name="Hansen N.F."/>
            <person name="Hayashizaki Y."/>
            <person name="Johnson-Hopson C."/>
            <person name="Hsuan V.W."/>
            <person name="Iida K."/>
            <person name="Karnes M."/>
            <person name="Khan S."/>
            <person name="Koesema E."/>
            <person name="Ishida J."/>
            <person name="Jiang P.X."/>
            <person name="Jones T."/>
            <person name="Kawai J."/>
            <person name="Kamiya A."/>
            <person name="Meyers C."/>
            <person name="Nakajima M."/>
            <person name="Narusaka M."/>
            <person name="Seki M."/>
            <person name="Sakurai T."/>
            <person name="Satou M."/>
            <person name="Tamse R."/>
            <person name="Vaysberg M."/>
            <person name="Wallender E.K."/>
            <person name="Wong C."/>
            <person name="Yamamura Y."/>
            <person name="Yuan S."/>
            <person name="Shinozaki K."/>
            <person name="Davis R.W."/>
            <person name="Theologis A."/>
            <person name="Ecker J.R."/>
        </authorList>
    </citation>
    <scope>NUCLEOTIDE SEQUENCE [LARGE SCALE MRNA]</scope>
    <source>
        <strain>cv. Columbia</strain>
    </source>
</reference>
<reference key="4">
    <citation type="journal article" date="2001" name="J. Plant Physiol.">
        <title>Inactivation of Arabidopsis SIP1 leads to reduced levels of sugars and drought tolerance.</title>
        <authorList>
            <person name="Anderson C.M."/>
            <person name="Kohorn B.D."/>
        </authorList>
    </citation>
    <scope>DISRUPTION PHENOTYPE</scope>
</reference>
<reference key="5">
    <citation type="journal article" date="2004" name="FEBS Lett.">
        <title>The role of raffinose in the cold acclimation response of Arabidopsis thaliana.</title>
        <authorList>
            <person name="Zuther E."/>
            <person name="Buechel K."/>
            <person name="Hundertmark M."/>
            <person name="Stitt M."/>
            <person name="Hincha D.K."/>
            <person name="Heyer A.G."/>
        </authorList>
    </citation>
    <scope>DISRUPTION PHENOTYPE</scope>
</reference>
<reference key="6">
    <citation type="journal article" date="2007" name="Plant J.">
        <title>Transcript and metabolite profiling during cold acclimation of Arabidopsis reveals an intricate relationship of cold-regulated gene expression with modifications in metabolite content.</title>
        <authorList>
            <person name="Kaplan F."/>
            <person name="Kopka J."/>
            <person name="Sung D.Y."/>
            <person name="Zhao W."/>
            <person name="Popp M."/>
            <person name="Porat R."/>
            <person name="Guy C.L."/>
        </authorList>
    </citation>
    <scope>INDUCTION BY COLD</scope>
</reference>
<reference key="7">
    <citation type="journal article" date="2008" name="Plant Physiol.">
        <title>Galactinol and raffinose constitute a novel function to protect plants from oxidative damage.</title>
        <authorList>
            <person name="Nishizawa A."/>
            <person name="Yabuta Y."/>
            <person name="Shigeoka S."/>
        </authorList>
    </citation>
    <scope>INDUCTION BY OXIDATIVE STRESS</scope>
    <scope>GENE FAMILY</scope>
    <scope>NOMENCLATURE</scope>
</reference>
<reference key="8">
    <citation type="journal article" date="2009" name="J. Proteomics">
        <title>Phosphoproteomic analysis of nuclei-enriched fractions from Arabidopsis thaliana.</title>
        <authorList>
            <person name="Jones A.M.E."/>
            <person name="MacLean D."/>
            <person name="Studholme D.J."/>
            <person name="Serna-Sanz A."/>
            <person name="Andreasson E."/>
            <person name="Rathjen J.P."/>
            <person name="Peck S.C."/>
        </authorList>
    </citation>
    <scope>IDENTIFICATION BY MASS SPECTROMETRY [LARGE SCALE ANALYSIS]</scope>
    <source>
        <strain>cv. Columbia</strain>
    </source>
</reference>
<reference key="9">
    <citation type="journal article" date="2009" name="Plant Physiol.">
        <title>Large-scale Arabidopsis phosphoproteome profiling reveals novel chloroplast kinase substrates and phosphorylation networks.</title>
        <authorList>
            <person name="Reiland S."/>
            <person name="Messerli G."/>
            <person name="Baerenfaller K."/>
            <person name="Gerrits B."/>
            <person name="Endler A."/>
            <person name="Grossmann J."/>
            <person name="Gruissem W."/>
            <person name="Baginsky S."/>
        </authorList>
    </citation>
    <scope>PHOSPHORYLATION [LARGE SCALE ANALYSIS] AT SER-9 AND SER-11</scope>
    <scope>IDENTIFICATION BY MASS SPECTROMETRY [LARGE SCALE ANALYSIS]</scope>
</reference>